<evidence type="ECO:0000255" key="1">
    <source>
        <dbReference type="HAMAP-Rule" id="MF_00165"/>
    </source>
</evidence>
<feature type="chain" id="PRO_1000190755" description="Thymidylate kinase">
    <location>
        <begin position="1"/>
        <end position="209"/>
    </location>
</feature>
<feature type="binding site" evidence="1">
    <location>
        <begin position="10"/>
        <end position="17"/>
    </location>
    <ligand>
        <name>ATP</name>
        <dbReference type="ChEBI" id="CHEBI:30616"/>
    </ligand>
</feature>
<protein>
    <recommendedName>
        <fullName evidence="1">Thymidylate kinase</fullName>
        <ecNumber evidence="1">2.7.4.9</ecNumber>
    </recommendedName>
    <alternativeName>
        <fullName evidence="1">dTMP kinase</fullName>
    </alternativeName>
</protein>
<comment type="function">
    <text evidence="1">Phosphorylation of dTMP to form dTDP in both de novo and salvage pathways of dTTP synthesis.</text>
</comment>
<comment type="catalytic activity">
    <reaction evidence="1">
        <text>dTMP + ATP = dTDP + ADP</text>
        <dbReference type="Rhea" id="RHEA:13517"/>
        <dbReference type="ChEBI" id="CHEBI:30616"/>
        <dbReference type="ChEBI" id="CHEBI:58369"/>
        <dbReference type="ChEBI" id="CHEBI:63528"/>
        <dbReference type="ChEBI" id="CHEBI:456216"/>
        <dbReference type="EC" id="2.7.4.9"/>
    </reaction>
</comment>
<comment type="similarity">
    <text evidence="1">Belongs to the thymidylate kinase family.</text>
</comment>
<dbReference type="EC" id="2.7.4.9" evidence="1"/>
<dbReference type="EMBL" id="CP000922">
    <property type="protein sequence ID" value="ACJ32409.1"/>
    <property type="molecule type" value="Genomic_DNA"/>
</dbReference>
<dbReference type="RefSeq" id="WP_012573794.1">
    <property type="nucleotide sequence ID" value="NC_011567.1"/>
</dbReference>
<dbReference type="SMR" id="B7GFF9"/>
<dbReference type="STRING" id="491915.Aflv_0025"/>
<dbReference type="GeneID" id="7036219"/>
<dbReference type="KEGG" id="afl:Aflv_0025"/>
<dbReference type="PATRIC" id="fig|491915.6.peg.24"/>
<dbReference type="eggNOG" id="COG0125">
    <property type="taxonomic scope" value="Bacteria"/>
</dbReference>
<dbReference type="HOGENOM" id="CLU_049131_0_2_9"/>
<dbReference type="Proteomes" id="UP000000742">
    <property type="component" value="Chromosome"/>
</dbReference>
<dbReference type="GO" id="GO:0005829">
    <property type="term" value="C:cytosol"/>
    <property type="evidence" value="ECO:0007669"/>
    <property type="project" value="TreeGrafter"/>
</dbReference>
<dbReference type="GO" id="GO:0005524">
    <property type="term" value="F:ATP binding"/>
    <property type="evidence" value="ECO:0007669"/>
    <property type="project" value="UniProtKB-UniRule"/>
</dbReference>
<dbReference type="GO" id="GO:0004798">
    <property type="term" value="F:dTMP kinase activity"/>
    <property type="evidence" value="ECO:0007669"/>
    <property type="project" value="UniProtKB-UniRule"/>
</dbReference>
<dbReference type="GO" id="GO:0006233">
    <property type="term" value="P:dTDP biosynthetic process"/>
    <property type="evidence" value="ECO:0007669"/>
    <property type="project" value="InterPro"/>
</dbReference>
<dbReference type="GO" id="GO:0006235">
    <property type="term" value="P:dTTP biosynthetic process"/>
    <property type="evidence" value="ECO:0007669"/>
    <property type="project" value="UniProtKB-UniRule"/>
</dbReference>
<dbReference type="GO" id="GO:0006227">
    <property type="term" value="P:dUDP biosynthetic process"/>
    <property type="evidence" value="ECO:0007669"/>
    <property type="project" value="TreeGrafter"/>
</dbReference>
<dbReference type="CDD" id="cd01672">
    <property type="entry name" value="TMPK"/>
    <property type="match status" value="1"/>
</dbReference>
<dbReference type="FunFam" id="3.40.50.300:FF:000225">
    <property type="entry name" value="Thymidylate kinase"/>
    <property type="match status" value="1"/>
</dbReference>
<dbReference type="Gene3D" id="3.40.50.300">
    <property type="entry name" value="P-loop containing nucleotide triphosphate hydrolases"/>
    <property type="match status" value="1"/>
</dbReference>
<dbReference type="HAMAP" id="MF_00165">
    <property type="entry name" value="Thymidylate_kinase"/>
    <property type="match status" value="1"/>
</dbReference>
<dbReference type="InterPro" id="IPR027417">
    <property type="entry name" value="P-loop_NTPase"/>
</dbReference>
<dbReference type="InterPro" id="IPR039430">
    <property type="entry name" value="Thymidylate_kin-like_dom"/>
</dbReference>
<dbReference type="InterPro" id="IPR018095">
    <property type="entry name" value="Thymidylate_kin_CS"/>
</dbReference>
<dbReference type="InterPro" id="IPR018094">
    <property type="entry name" value="Thymidylate_kinase"/>
</dbReference>
<dbReference type="NCBIfam" id="TIGR00041">
    <property type="entry name" value="DTMP_kinase"/>
    <property type="match status" value="1"/>
</dbReference>
<dbReference type="PANTHER" id="PTHR10344">
    <property type="entry name" value="THYMIDYLATE KINASE"/>
    <property type="match status" value="1"/>
</dbReference>
<dbReference type="PANTHER" id="PTHR10344:SF4">
    <property type="entry name" value="UMP-CMP KINASE 2, MITOCHONDRIAL"/>
    <property type="match status" value="1"/>
</dbReference>
<dbReference type="Pfam" id="PF02223">
    <property type="entry name" value="Thymidylate_kin"/>
    <property type="match status" value="1"/>
</dbReference>
<dbReference type="SUPFAM" id="SSF52540">
    <property type="entry name" value="P-loop containing nucleoside triphosphate hydrolases"/>
    <property type="match status" value="1"/>
</dbReference>
<dbReference type="PROSITE" id="PS01331">
    <property type="entry name" value="THYMIDYLATE_KINASE"/>
    <property type="match status" value="1"/>
</dbReference>
<accession>B7GFF9</accession>
<sequence length="209" mass="23781">MSYLFFSFEGPEGAGKTTIVRMLKDYLSEQHVDVVATREPGGIDIAEQIRAVILHPNNERMDARTEALLYAAARRQHLVEKVIPALKDGKVVLCDRFIDSSLAYQGVARGLGIDEILAINAFAIENWMPILTIYFDIDPSLGLARIRENGSREVNRLDLEELSFHEQVRKGYMVLLDRFPNRIKKVDATQPITKVFEDVWALIEPLIRK</sequence>
<proteinExistence type="inferred from homology"/>
<gene>
    <name evidence="1" type="primary">tmk</name>
    <name type="ordered locus">Aflv_0025</name>
</gene>
<organism>
    <name type="scientific">Anoxybacillus flavithermus (strain DSM 21510 / WK1)</name>
    <dbReference type="NCBI Taxonomy" id="491915"/>
    <lineage>
        <taxon>Bacteria</taxon>
        <taxon>Bacillati</taxon>
        <taxon>Bacillota</taxon>
        <taxon>Bacilli</taxon>
        <taxon>Bacillales</taxon>
        <taxon>Anoxybacillaceae</taxon>
        <taxon>Anoxybacillus</taxon>
    </lineage>
</organism>
<reference key="1">
    <citation type="journal article" date="2008" name="Genome Biol.">
        <title>Encapsulated in silica: genome, proteome and physiology of the thermophilic bacterium Anoxybacillus flavithermus WK1.</title>
        <authorList>
            <person name="Saw J.H."/>
            <person name="Mountain B.W."/>
            <person name="Feng L."/>
            <person name="Omelchenko M.V."/>
            <person name="Hou S."/>
            <person name="Saito J.A."/>
            <person name="Stott M.B."/>
            <person name="Li D."/>
            <person name="Zhao G."/>
            <person name="Wu J."/>
            <person name="Galperin M.Y."/>
            <person name="Koonin E.V."/>
            <person name="Makarova K.S."/>
            <person name="Wolf Y.I."/>
            <person name="Rigden D.J."/>
            <person name="Dunfield P.F."/>
            <person name="Wang L."/>
            <person name="Alam M."/>
        </authorList>
    </citation>
    <scope>NUCLEOTIDE SEQUENCE [LARGE SCALE GENOMIC DNA]</scope>
    <source>
        <strain>DSM 21510 / WK1</strain>
    </source>
</reference>
<name>KTHY_ANOFW</name>
<keyword id="KW-0067">ATP-binding</keyword>
<keyword id="KW-0418">Kinase</keyword>
<keyword id="KW-0545">Nucleotide biosynthesis</keyword>
<keyword id="KW-0547">Nucleotide-binding</keyword>
<keyword id="KW-0808">Transferase</keyword>